<proteinExistence type="inferred from homology"/>
<organism>
    <name type="scientific">Bacillus velezensis (strain DSM 23117 / BGSC 10A6 / LMG 26770 / FZB42)</name>
    <name type="common">Bacillus amyloliquefaciens subsp. plantarum</name>
    <dbReference type="NCBI Taxonomy" id="326423"/>
    <lineage>
        <taxon>Bacteria</taxon>
        <taxon>Bacillati</taxon>
        <taxon>Bacillota</taxon>
        <taxon>Bacilli</taxon>
        <taxon>Bacillales</taxon>
        <taxon>Bacillaceae</taxon>
        <taxon>Bacillus</taxon>
        <taxon>Bacillus amyloliquefaciens group</taxon>
    </lineage>
</organism>
<accession>A7Z7A7</accession>
<reference key="1">
    <citation type="journal article" date="2007" name="Nat. Biotechnol.">
        <title>Comparative analysis of the complete genome sequence of the plant growth-promoting bacterium Bacillus amyloliquefaciens FZB42.</title>
        <authorList>
            <person name="Chen X.H."/>
            <person name="Koumoutsi A."/>
            <person name="Scholz R."/>
            <person name="Eisenreich A."/>
            <person name="Schneider K."/>
            <person name="Heinemeyer I."/>
            <person name="Morgenstern B."/>
            <person name="Voss B."/>
            <person name="Hess W.R."/>
            <person name="Reva O."/>
            <person name="Junge H."/>
            <person name="Voigt B."/>
            <person name="Jungblut P.R."/>
            <person name="Vater J."/>
            <person name="Suessmuth R."/>
            <person name="Liesegang H."/>
            <person name="Strittmatter A."/>
            <person name="Gottschalk G."/>
            <person name="Borriss R."/>
        </authorList>
    </citation>
    <scope>NUCLEOTIDE SEQUENCE [LARGE SCALE GENOMIC DNA]</scope>
    <source>
        <strain>DSM 23117 / BGSC 10A6 / LMG 26770 / FZB42</strain>
    </source>
</reference>
<dbReference type="EC" id="1.2.1.70" evidence="1"/>
<dbReference type="EMBL" id="CP000560">
    <property type="protein sequence ID" value="ABS74883.1"/>
    <property type="status" value="ALT_INIT"/>
    <property type="molecule type" value="Genomic_DNA"/>
</dbReference>
<dbReference type="RefSeq" id="WP_041482263.1">
    <property type="nucleotide sequence ID" value="NC_009725.2"/>
</dbReference>
<dbReference type="SMR" id="A7Z7A7"/>
<dbReference type="GeneID" id="93081665"/>
<dbReference type="KEGG" id="bay:RBAM_025230"/>
<dbReference type="HOGENOM" id="CLU_035113_2_2_9"/>
<dbReference type="UniPathway" id="UPA00251">
    <property type="reaction ID" value="UER00316"/>
</dbReference>
<dbReference type="Proteomes" id="UP000001120">
    <property type="component" value="Chromosome"/>
</dbReference>
<dbReference type="GO" id="GO:0008883">
    <property type="term" value="F:glutamyl-tRNA reductase activity"/>
    <property type="evidence" value="ECO:0007669"/>
    <property type="project" value="UniProtKB-UniRule"/>
</dbReference>
<dbReference type="GO" id="GO:0050661">
    <property type="term" value="F:NADP binding"/>
    <property type="evidence" value="ECO:0007669"/>
    <property type="project" value="InterPro"/>
</dbReference>
<dbReference type="GO" id="GO:0019353">
    <property type="term" value="P:protoporphyrinogen IX biosynthetic process from glutamate"/>
    <property type="evidence" value="ECO:0007669"/>
    <property type="project" value="TreeGrafter"/>
</dbReference>
<dbReference type="CDD" id="cd05213">
    <property type="entry name" value="NAD_bind_Glutamyl_tRNA_reduct"/>
    <property type="match status" value="1"/>
</dbReference>
<dbReference type="FunFam" id="3.30.460.30:FF:000001">
    <property type="entry name" value="Glutamyl-tRNA reductase"/>
    <property type="match status" value="1"/>
</dbReference>
<dbReference type="FunFam" id="3.40.50.720:FF:000031">
    <property type="entry name" value="Glutamyl-tRNA reductase"/>
    <property type="match status" value="1"/>
</dbReference>
<dbReference type="Gene3D" id="3.30.460.30">
    <property type="entry name" value="Glutamyl-tRNA reductase, N-terminal domain"/>
    <property type="match status" value="1"/>
</dbReference>
<dbReference type="Gene3D" id="3.40.50.720">
    <property type="entry name" value="NAD(P)-binding Rossmann-like Domain"/>
    <property type="match status" value="1"/>
</dbReference>
<dbReference type="HAMAP" id="MF_00087">
    <property type="entry name" value="Glu_tRNA_reductase"/>
    <property type="match status" value="1"/>
</dbReference>
<dbReference type="InterPro" id="IPR000343">
    <property type="entry name" value="4pyrrol_synth_GluRdtase"/>
</dbReference>
<dbReference type="InterPro" id="IPR015896">
    <property type="entry name" value="4pyrrol_synth_GluRdtase_dimer"/>
</dbReference>
<dbReference type="InterPro" id="IPR015895">
    <property type="entry name" value="4pyrrol_synth_GluRdtase_N"/>
</dbReference>
<dbReference type="InterPro" id="IPR018214">
    <property type="entry name" value="GluRdtase_CS"/>
</dbReference>
<dbReference type="InterPro" id="IPR036453">
    <property type="entry name" value="GluRdtase_dimer_dom_sf"/>
</dbReference>
<dbReference type="InterPro" id="IPR036343">
    <property type="entry name" value="GluRdtase_N_sf"/>
</dbReference>
<dbReference type="InterPro" id="IPR036291">
    <property type="entry name" value="NAD(P)-bd_dom_sf"/>
</dbReference>
<dbReference type="InterPro" id="IPR006151">
    <property type="entry name" value="Shikm_DH/Glu-tRNA_Rdtase"/>
</dbReference>
<dbReference type="NCBIfam" id="TIGR01035">
    <property type="entry name" value="hemA"/>
    <property type="match status" value="1"/>
</dbReference>
<dbReference type="NCBIfam" id="NF000744">
    <property type="entry name" value="PRK00045.1-3"/>
    <property type="match status" value="1"/>
</dbReference>
<dbReference type="PANTHER" id="PTHR43013">
    <property type="entry name" value="GLUTAMYL-TRNA REDUCTASE"/>
    <property type="match status" value="1"/>
</dbReference>
<dbReference type="PANTHER" id="PTHR43013:SF1">
    <property type="entry name" value="GLUTAMYL-TRNA REDUCTASE"/>
    <property type="match status" value="1"/>
</dbReference>
<dbReference type="Pfam" id="PF00745">
    <property type="entry name" value="GlutR_dimer"/>
    <property type="match status" value="1"/>
</dbReference>
<dbReference type="Pfam" id="PF05201">
    <property type="entry name" value="GlutR_N"/>
    <property type="match status" value="1"/>
</dbReference>
<dbReference type="Pfam" id="PF01488">
    <property type="entry name" value="Shikimate_DH"/>
    <property type="match status" value="1"/>
</dbReference>
<dbReference type="PIRSF" id="PIRSF000445">
    <property type="entry name" value="4pyrrol_synth_GluRdtase"/>
    <property type="match status" value="1"/>
</dbReference>
<dbReference type="SUPFAM" id="SSF69742">
    <property type="entry name" value="Glutamyl tRNA-reductase catalytic, N-terminal domain"/>
    <property type="match status" value="1"/>
</dbReference>
<dbReference type="SUPFAM" id="SSF69075">
    <property type="entry name" value="Glutamyl tRNA-reductase dimerization domain"/>
    <property type="match status" value="1"/>
</dbReference>
<dbReference type="SUPFAM" id="SSF51735">
    <property type="entry name" value="NAD(P)-binding Rossmann-fold domains"/>
    <property type="match status" value="1"/>
</dbReference>
<dbReference type="PROSITE" id="PS00747">
    <property type="entry name" value="GLUTR"/>
    <property type="match status" value="1"/>
</dbReference>
<feature type="chain" id="PRO_0000335011" description="Glutamyl-tRNA reductase">
    <location>
        <begin position="1"/>
        <end position="455"/>
    </location>
</feature>
<feature type="active site" description="Nucleophile" evidence="1">
    <location>
        <position position="50"/>
    </location>
</feature>
<feature type="binding site" evidence="1">
    <location>
        <begin position="49"/>
        <end position="52"/>
    </location>
    <ligand>
        <name>substrate</name>
    </ligand>
</feature>
<feature type="binding site" evidence="1">
    <location>
        <position position="109"/>
    </location>
    <ligand>
        <name>substrate</name>
    </ligand>
</feature>
<feature type="binding site" evidence="1">
    <location>
        <begin position="114"/>
        <end position="116"/>
    </location>
    <ligand>
        <name>substrate</name>
    </ligand>
</feature>
<feature type="binding site" evidence="1">
    <location>
        <position position="120"/>
    </location>
    <ligand>
        <name>substrate</name>
    </ligand>
</feature>
<feature type="binding site" evidence="1">
    <location>
        <begin position="189"/>
        <end position="194"/>
    </location>
    <ligand>
        <name>NADP(+)</name>
        <dbReference type="ChEBI" id="CHEBI:58349"/>
    </ligand>
</feature>
<feature type="site" description="Important for activity" evidence="1">
    <location>
        <position position="99"/>
    </location>
</feature>
<protein>
    <recommendedName>
        <fullName evidence="1">Glutamyl-tRNA reductase</fullName>
        <shortName evidence="1">GluTR</shortName>
        <ecNumber evidence="1">1.2.1.70</ecNumber>
    </recommendedName>
</protein>
<name>HEM1_BACVZ</name>
<keyword id="KW-0521">NADP</keyword>
<keyword id="KW-0560">Oxidoreductase</keyword>
<keyword id="KW-0627">Porphyrin biosynthesis</keyword>
<evidence type="ECO:0000255" key="1">
    <source>
        <dbReference type="HAMAP-Rule" id="MF_00087"/>
    </source>
</evidence>
<evidence type="ECO:0000305" key="2"/>
<sequence length="455" mass="50798">MHILVVGVDYKSAPIEIREKISFQPDELAEAMLRLKGEKSVLENIIVSTCNRTEIYAVVDQLHTGRYYIKTFLSEWFSLPKEELSPFLKFYESDAAIEHLFRVACGLDSMVIGETQILGQVRSSFKTAQAEKTIGTIFNELFKQAVTVGKRTHAETDIGANAVSVSYAAVELAKKIFGSLSNKHILILGAGKMGELAAENLHGQGIGKVTVINRTFLKAKALADRFSGEARSLNQLEHALAEADILISSTGASDFVVSKEMMERAGRQRKGRPLFMVDIAVPRDLDPALNDLEGVFLYDIDDLEGIVEANLQERRETAEKVELFIEAAIVEFKQWLNTLGVVPVISALREKALSIQSDTMQSIERKLPHLTVREKKLLSKHTKSIINQMLRDPILKAKELAAEADSEEKLKLFMQIFDIEEEAGRQLDKSLDNRQTVHSFQKAEAKTGLRPLVSE</sequence>
<gene>
    <name evidence="1" type="primary">hemA</name>
    <name type="ordered locus">RBAM_025230</name>
</gene>
<comment type="function">
    <text evidence="1">Catalyzes the NADPH-dependent reduction of glutamyl-tRNA(Glu) to glutamate 1-semialdehyde (GSA).</text>
</comment>
<comment type="catalytic activity">
    <reaction evidence="1">
        <text>(S)-4-amino-5-oxopentanoate + tRNA(Glu) + NADP(+) = L-glutamyl-tRNA(Glu) + NADPH + H(+)</text>
        <dbReference type="Rhea" id="RHEA:12344"/>
        <dbReference type="Rhea" id="RHEA-COMP:9663"/>
        <dbReference type="Rhea" id="RHEA-COMP:9680"/>
        <dbReference type="ChEBI" id="CHEBI:15378"/>
        <dbReference type="ChEBI" id="CHEBI:57501"/>
        <dbReference type="ChEBI" id="CHEBI:57783"/>
        <dbReference type="ChEBI" id="CHEBI:58349"/>
        <dbReference type="ChEBI" id="CHEBI:78442"/>
        <dbReference type="ChEBI" id="CHEBI:78520"/>
        <dbReference type="EC" id="1.2.1.70"/>
    </reaction>
</comment>
<comment type="pathway">
    <text evidence="1">Porphyrin-containing compound metabolism; protoporphyrin-IX biosynthesis; 5-aminolevulinate from L-glutamyl-tRNA(Glu): step 1/2.</text>
</comment>
<comment type="subunit">
    <text evidence="1">Homodimer.</text>
</comment>
<comment type="domain">
    <text evidence="1">Possesses an unusual extended V-shaped dimeric structure with each monomer consisting of three distinct domains arranged along a curved 'spinal' alpha-helix. The N-terminal catalytic domain specifically recognizes the glutamate moiety of the substrate. The second domain is the NADPH-binding domain, and the third C-terminal domain is responsible for dimerization.</text>
</comment>
<comment type="miscellaneous">
    <text evidence="1">During catalysis, the active site Cys acts as a nucleophile attacking the alpha-carbonyl group of tRNA-bound glutamate with the formation of a thioester intermediate between enzyme and glutamate, and the concomitant release of tRNA(Glu). The thioester intermediate is finally reduced by direct hydride transfer from NADPH, to form the product GSA.</text>
</comment>
<comment type="similarity">
    <text evidence="1">Belongs to the glutamyl-tRNA reductase family.</text>
</comment>
<comment type="sequence caution" evidence="2">
    <conflict type="erroneous initiation">
        <sequence resource="EMBL-CDS" id="ABS74883"/>
    </conflict>
</comment>